<comment type="function">
    <text evidence="1">Binds the lower part of the 30S subunit head. Binds mRNA in the 70S ribosome, positioning it for translation.</text>
</comment>
<comment type="subunit">
    <text evidence="1">Part of the 30S ribosomal subunit. Forms a tight complex with proteins S10 and S14.</text>
</comment>
<comment type="similarity">
    <text evidence="1">Belongs to the universal ribosomal protein uS3 family.</text>
</comment>
<name>RS3_LEGPA</name>
<proteinExistence type="inferred from homology"/>
<feature type="chain" id="PRO_0000130136" description="Small ribosomal subunit protein uS3">
    <location>
        <begin position="1"/>
        <end position="218"/>
    </location>
</feature>
<feature type="domain" description="KH type-2" evidence="1">
    <location>
        <begin position="38"/>
        <end position="106"/>
    </location>
</feature>
<gene>
    <name evidence="1" type="primary">rpsC</name>
    <name type="ordered locus">lpp0400</name>
</gene>
<sequence length="218" mass="24117">MGQKVNPIGIRLGIIKDWNSKWFAGKRYAEFLIQDIKLRNDLKKKLMAAAVSKILIERPANNAVVTILTARPGVIIGKKGGGIETLRKEISDNLGVPVHLNIEEVKKPELDATLVAEGIAQQLEQRVMFRRAMKRAVTSALKAGAKGIKICVSGRLGGAEIARSEWYREGRVPLHTFRADIDYGTAESKTTYGIIGVKVWIFKGEILPQKKRSTESAQ</sequence>
<protein>
    <recommendedName>
        <fullName evidence="1">Small ribosomal subunit protein uS3</fullName>
    </recommendedName>
    <alternativeName>
        <fullName evidence="2">30S ribosomal protein S3</fullName>
    </alternativeName>
</protein>
<accession>Q5X853</accession>
<keyword id="KW-0687">Ribonucleoprotein</keyword>
<keyword id="KW-0689">Ribosomal protein</keyword>
<keyword id="KW-0694">RNA-binding</keyword>
<keyword id="KW-0699">rRNA-binding</keyword>
<organism>
    <name type="scientific">Legionella pneumophila (strain Paris)</name>
    <dbReference type="NCBI Taxonomy" id="297246"/>
    <lineage>
        <taxon>Bacteria</taxon>
        <taxon>Pseudomonadati</taxon>
        <taxon>Pseudomonadota</taxon>
        <taxon>Gammaproteobacteria</taxon>
        <taxon>Legionellales</taxon>
        <taxon>Legionellaceae</taxon>
        <taxon>Legionella</taxon>
    </lineage>
</organism>
<reference key="1">
    <citation type="journal article" date="2004" name="Nat. Genet.">
        <title>Evidence in the Legionella pneumophila genome for exploitation of host cell functions and high genome plasticity.</title>
        <authorList>
            <person name="Cazalet C."/>
            <person name="Rusniok C."/>
            <person name="Brueggemann H."/>
            <person name="Zidane N."/>
            <person name="Magnier A."/>
            <person name="Ma L."/>
            <person name="Tichit M."/>
            <person name="Jarraud S."/>
            <person name="Bouchier C."/>
            <person name="Vandenesch F."/>
            <person name="Kunst F."/>
            <person name="Etienne J."/>
            <person name="Glaser P."/>
            <person name="Buchrieser C."/>
        </authorList>
    </citation>
    <scope>NUCLEOTIDE SEQUENCE [LARGE SCALE GENOMIC DNA]</scope>
    <source>
        <strain>Paris</strain>
    </source>
</reference>
<evidence type="ECO:0000255" key="1">
    <source>
        <dbReference type="HAMAP-Rule" id="MF_01309"/>
    </source>
</evidence>
<evidence type="ECO:0000305" key="2"/>
<dbReference type="EMBL" id="CR628336">
    <property type="protein sequence ID" value="CAH11548.1"/>
    <property type="molecule type" value="Genomic_DNA"/>
</dbReference>
<dbReference type="RefSeq" id="WP_010946084.1">
    <property type="nucleotide sequence ID" value="NC_006368.1"/>
</dbReference>
<dbReference type="SMR" id="Q5X853"/>
<dbReference type="GeneID" id="57034338"/>
<dbReference type="KEGG" id="lpp:lpp0400"/>
<dbReference type="LegioList" id="lpp0400"/>
<dbReference type="HOGENOM" id="CLU_058591_0_2_6"/>
<dbReference type="GO" id="GO:0022627">
    <property type="term" value="C:cytosolic small ribosomal subunit"/>
    <property type="evidence" value="ECO:0007669"/>
    <property type="project" value="TreeGrafter"/>
</dbReference>
<dbReference type="GO" id="GO:0003729">
    <property type="term" value="F:mRNA binding"/>
    <property type="evidence" value="ECO:0007669"/>
    <property type="project" value="UniProtKB-UniRule"/>
</dbReference>
<dbReference type="GO" id="GO:0019843">
    <property type="term" value="F:rRNA binding"/>
    <property type="evidence" value="ECO:0007669"/>
    <property type="project" value="UniProtKB-UniRule"/>
</dbReference>
<dbReference type="GO" id="GO:0003735">
    <property type="term" value="F:structural constituent of ribosome"/>
    <property type="evidence" value="ECO:0007669"/>
    <property type="project" value="InterPro"/>
</dbReference>
<dbReference type="GO" id="GO:0006412">
    <property type="term" value="P:translation"/>
    <property type="evidence" value="ECO:0007669"/>
    <property type="project" value="UniProtKB-UniRule"/>
</dbReference>
<dbReference type="CDD" id="cd02412">
    <property type="entry name" value="KH-II_30S_S3"/>
    <property type="match status" value="1"/>
</dbReference>
<dbReference type="FunFam" id="3.30.1140.32:FF:000001">
    <property type="entry name" value="30S ribosomal protein S3"/>
    <property type="match status" value="1"/>
</dbReference>
<dbReference type="FunFam" id="3.30.300.20:FF:000001">
    <property type="entry name" value="30S ribosomal protein S3"/>
    <property type="match status" value="1"/>
</dbReference>
<dbReference type="Gene3D" id="3.30.300.20">
    <property type="match status" value="1"/>
</dbReference>
<dbReference type="Gene3D" id="3.30.1140.32">
    <property type="entry name" value="Ribosomal protein S3, C-terminal domain"/>
    <property type="match status" value="1"/>
</dbReference>
<dbReference type="HAMAP" id="MF_01309_B">
    <property type="entry name" value="Ribosomal_uS3_B"/>
    <property type="match status" value="1"/>
</dbReference>
<dbReference type="InterPro" id="IPR004087">
    <property type="entry name" value="KH_dom"/>
</dbReference>
<dbReference type="InterPro" id="IPR015946">
    <property type="entry name" value="KH_dom-like_a/b"/>
</dbReference>
<dbReference type="InterPro" id="IPR004044">
    <property type="entry name" value="KH_dom_type_2"/>
</dbReference>
<dbReference type="InterPro" id="IPR009019">
    <property type="entry name" value="KH_sf_prok-type"/>
</dbReference>
<dbReference type="InterPro" id="IPR036419">
    <property type="entry name" value="Ribosomal_S3_C_sf"/>
</dbReference>
<dbReference type="InterPro" id="IPR005704">
    <property type="entry name" value="Ribosomal_uS3_bac-typ"/>
</dbReference>
<dbReference type="InterPro" id="IPR001351">
    <property type="entry name" value="Ribosomal_uS3_C"/>
</dbReference>
<dbReference type="InterPro" id="IPR018280">
    <property type="entry name" value="Ribosomal_uS3_CS"/>
</dbReference>
<dbReference type="NCBIfam" id="TIGR01009">
    <property type="entry name" value="rpsC_bact"/>
    <property type="match status" value="1"/>
</dbReference>
<dbReference type="PANTHER" id="PTHR11760">
    <property type="entry name" value="30S/40S RIBOSOMAL PROTEIN S3"/>
    <property type="match status" value="1"/>
</dbReference>
<dbReference type="PANTHER" id="PTHR11760:SF19">
    <property type="entry name" value="SMALL RIBOSOMAL SUBUNIT PROTEIN US3C"/>
    <property type="match status" value="1"/>
</dbReference>
<dbReference type="Pfam" id="PF07650">
    <property type="entry name" value="KH_2"/>
    <property type="match status" value="1"/>
</dbReference>
<dbReference type="Pfam" id="PF00189">
    <property type="entry name" value="Ribosomal_S3_C"/>
    <property type="match status" value="1"/>
</dbReference>
<dbReference type="SMART" id="SM00322">
    <property type="entry name" value="KH"/>
    <property type="match status" value="1"/>
</dbReference>
<dbReference type="SUPFAM" id="SSF54814">
    <property type="entry name" value="Prokaryotic type KH domain (KH-domain type II)"/>
    <property type="match status" value="1"/>
</dbReference>
<dbReference type="SUPFAM" id="SSF54821">
    <property type="entry name" value="Ribosomal protein S3 C-terminal domain"/>
    <property type="match status" value="1"/>
</dbReference>
<dbReference type="PROSITE" id="PS50823">
    <property type="entry name" value="KH_TYPE_2"/>
    <property type="match status" value="1"/>
</dbReference>
<dbReference type="PROSITE" id="PS00548">
    <property type="entry name" value="RIBOSOMAL_S3"/>
    <property type="match status" value="1"/>
</dbReference>